<dbReference type="EMBL" id="AL939115">
    <property type="protein sequence ID" value="CAB95917.1"/>
    <property type="molecule type" value="Genomic_DNA"/>
</dbReference>
<dbReference type="RefSeq" id="NP_627341.1">
    <property type="nucleotide sequence ID" value="NC_003888.3"/>
</dbReference>
<dbReference type="RefSeq" id="WP_003975690.1">
    <property type="nucleotide sequence ID" value="NZ_VNID01000013.1"/>
</dbReference>
<dbReference type="SMR" id="Q9K3T9"/>
<dbReference type="FunCoup" id="Q9K3T9">
    <property type="interactions" value="59"/>
</dbReference>
<dbReference type="STRING" id="100226.gene:17760741"/>
<dbReference type="PaxDb" id="100226-SCO3124"/>
<dbReference type="KEGG" id="sco:SCO3124"/>
<dbReference type="PATRIC" id="fig|100226.15.peg.3188"/>
<dbReference type="eggNOG" id="COG1825">
    <property type="taxonomic scope" value="Bacteria"/>
</dbReference>
<dbReference type="HOGENOM" id="CLU_075939_1_0_11"/>
<dbReference type="InParanoid" id="Q9K3T9"/>
<dbReference type="OrthoDB" id="5242980at2"/>
<dbReference type="PhylomeDB" id="Q9K3T9"/>
<dbReference type="Proteomes" id="UP000001973">
    <property type="component" value="Chromosome"/>
</dbReference>
<dbReference type="GO" id="GO:0022625">
    <property type="term" value="C:cytosolic large ribosomal subunit"/>
    <property type="evidence" value="ECO:0000318"/>
    <property type="project" value="GO_Central"/>
</dbReference>
<dbReference type="GO" id="GO:0008097">
    <property type="term" value="F:5S rRNA binding"/>
    <property type="evidence" value="ECO:0000318"/>
    <property type="project" value="GO_Central"/>
</dbReference>
<dbReference type="GO" id="GO:0003735">
    <property type="term" value="F:structural constituent of ribosome"/>
    <property type="evidence" value="ECO:0007669"/>
    <property type="project" value="InterPro"/>
</dbReference>
<dbReference type="GO" id="GO:0006412">
    <property type="term" value="P:translation"/>
    <property type="evidence" value="ECO:0000318"/>
    <property type="project" value="GO_Central"/>
</dbReference>
<dbReference type="CDD" id="cd00495">
    <property type="entry name" value="Ribosomal_L25_TL5_CTC"/>
    <property type="match status" value="1"/>
</dbReference>
<dbReference type="FunFam" id="2.170.120.20:FF:000013">
    <property type="entry name" value="50S ribosomal protein L25"/>
    <property type="match status" value="1"/>
</dbReference>
<dbReference type="FunFam" id="2.40.240.10:FF:000010">
    <property type="entry name" value="50S ribosomal protein L25"/>
    <property type="match status" value="1"/>
</dbReference>
<dbReference type="Gene3D" id="2.170.120.20">
    <property type="entry name" value="Ribosomal protein L25, beta domain"/>
    <property type="match status" value="1"/>
</dbReference>
<dbReference type="Gene3D" id="2.40.240.10">
    <property type="entry name" value="Ribosomal Protein L25, Chain P"/>
    <property type="match status" value="1"/>
</dbReference>
<dbReference type="HAMAP" id="MF_01334">
    <property type="entry name" value="Ribosomal_bL25_CTC"/>
    <property type="match status" value="1"/>
</dbReference>
<dbReference type="InterPro" id="IPR020056">
    <property type="entry name" value="Rbsml_bL25/Gln-tRNA_synth_N"/>
</dbReference>
<dbReference type="InterPro" id="IPR011035">
    <property type="entry name" value="Ribosomal_bL25/Gln-tRNA_synth"/>
</dbReference>
<dbReference type="InterPro" id="IPR020057">
    <property type="entry name" value="Ribosomal_bL25_b-dom"/>
</dbReference>
<dbReference type="InterPro" id="IPR037121">
    <property type="entry name" value="Ribosomal_bL25_C"/>
</dbReference>
<dbReference type="InterPro" id="IPR001021">
    <property type="entry name" value="Ribosomal_bL25_long"/>
</dbReference>
<dbReference type="InterPro" id="IPR029751">
    <property type="entry name" value="Ribosomal_L25_dom"/>
</dbReference>
<dbReference type="InterPro" id="IPR020930">
    <property type="entry name" value="Ribosomal_uL5_bac-type"/>
</dbReference>
<dbReference type="NCBIfam" id="TIGR00731">
    <property type="entry name" value="bL25_bact_ctc"/>
    <property type="match status" value="1"/>
</dbReference>
<dbReference type="NCBIfam" id="NF004131">
    <property type="entry name" value="PRK05618.2-1"/>
    <property type="match status" value="1"/>
</dbReference>
<dbReference type="PANTHER" id="PTHR33284">
    <property type="entry name" value="RIBOSOMAL PROTEIN L25/GLN-TRNA SYNTHETASE, ANTI-CODON-BINDING DOMAIN-CONTAINING PROTEIN"/>
    <property type="match status" value="1"/>
</dbReference>
<dbReference type="PANTHER" id="PTHR33284:SF1">
    <property type="entry name" value="RIBOSOMAL PROTEIN L25_GLN-TRNA SYNTHETASE, ANTI-CODON-BINDING DOMAIN-CONTAINING PROTEIN"/>
    <property type="match status" value="1"/>
</dbReference>
<dbReference type="Pfam" id="PF01386">
    <property type="entry name" value="Ribosomal_L25p"/>
    <property type="match status" value="1"/>
</dbReference>
<dbReference type="Pfam" id="PF14693">
    <property type="entry name" value="Ribosomal_TL5_C"/>
    <property type="match status" value="1"/>
</dbReference>
<dbReference type="SUPFAM" id="SSF50715">
    <property type="entry name" value="Ribosomal protein L25-like"/>
    <property type="match status" value="1"/>
</dbReference>
<comment type="function">
    <text evidence="1">This is one of the proteins that binds to the 5S RNA in the ribosome where it forms part of the central protuberance.</text>
</comment>
<comment type="subunit">
    <text evidence="1">Part of the 50S ribosomal subunit; part of the 5S rRNA/L5/L18/L25 subcomplex. Contacts the 5S rRNA. Binds to the 5S rRNA independently of L5 and L18.</text>
</comment>
<comment type="similarity">
    <text evidence="1">Belongs to the bacterial ribosomal protein bL25 family. CTC subfamily.</text>
</comment>
<proteinExistence type="inferred from homology"/>
<keyword id="KW-1185">Reference proteome</keyword>
<keyword id="KW-0687">Ribonucleoprotein</keyword>
<keyword id="KW-0689">Ribosomal protein</keyword>
<keyword id="KW-0694">RNA-binding</keyword>
<keyword id="KW-0699">rRNA-binding</keyword>
<feature type="chain" id="PRO_0000181603" description="Large ribosomal subunit protein bL25">
    <location>
        <begin position="1"/>
        <end position="198"/>
    </location>
</feature>
<name>RL25_STRCO</name>
<reference key="1">
    <citation type="journal article" date="2002" name="Nature">
        <title>Complete genome sequence of the model actinomycete Streptomyces coelicolor A3(2).</title>
        <authorList>
            <person name="Bentley S.D."/>
            <person name="Chater K.F."/>
            <person name="Cerdeno-Tarraga A.-M."/>
            <person name="Challis G.L."/>
            <person name="Thomson N.R."/>
            <person name="James K.D."/>
            <person name="Harris D.E."/>
            <person name="Quail M.A."/>
            <person name="Kieser H."/>
            <person name="Harper D."/>
            <person name="Bateman A."/>
            <person name="Brown S."/>
            <person name="Chandra G."/>
            <person name="Chen C.W."/>
            <person name="Collins M."/>
            <person name="Cronin A."/>
            <person name="Fraser A."/>
            <person name="Goble A."/>
            <person name="Hidalgo J."/>
            <person name="Hornsby T."/>
            <person name="Howarth S."/>
            <person name="Huang C.-H."/>
            <person name="Kieser T."/>
            <person name="Larke L."/>
            <person name="Murphy L.D."/>
            <person name="Oliver K."/>
            <person name="O'Neil S."/>
            <person name="Rabbinowitsch E."/>
            <person name="Rajandream M.A."/>
            <person name="Rutherford K.M."/>
            <person name="Rutter S."/>
            <person name="Seeger K."/>
            <person name="Saunders D."/>
            <person name="Sharp S."/>
            <person name="Squares R."/>
            <person name="Squares S."/>
            <person name="Taylor K."/>
            <person name="Warren T."/>
            <person name="Wietzorrek A."/>
            <person name="Woodward J.R."/>
            <person name="Barrell B.G."/>
            <person name="Parkhill J."/>
            <person name="Hopwood D.A."/>
        </authorList>
    </citation>
    <scope>NUCLEOTIDE SEQUENCE [LARGE SCALE GENOMIC DNA]</scope>
    <source>
        <strain>ATCC BAA-471 / A3(2) / M145</strain>
    </source>
</reference>
<organism>
    <name type="scientific">Streptomyces coelicolor (strain ATCC BAA-471 / A3(2) / M145)</name>
    <dbReference type="NCBI Taxonomy" id="100226"/>
    <lineage>
        <taxon>Bacteria</taxon>
        <taxon>Bacillati</taxon>
        <taxon>Actinomycetota</taxon>
        <taxon>Actinomycetes</taxon>
        <taxon>Kitasatosporales</taxon>
        <taxon>Streptomycetaceae</taxon>
        <taxon>Streptomyces</taxon>
        <taxon>Streptomyces albidoflavus group</taxon>
    </lineage>
</organism>
<sequence length="198" mass="20829">MSEVKLTAETRTEFGKGAARRIRRDNKVPGVLYGHGSDPLHLTLPGHELLLALRTSNVLIALDIDGKTNELAIPKSVQRDPIKGFLEHVDLQLVKRGETVSVEIPVQAEGELAPGGFLLEYVLDALPVEAEATHIPQQVTVSVAGLEAGASIHAKDIALPSGVKLDVDGDTVVLQVLSAQAEEAPAEGEGEGEGAAEA</sequence>
<accession>Q9K3T9</accession>
<gene>
    <name evidence="1" type="primary">rplY</name>
    <name evidence="1" type="synonym">ctc</name>
    <name type="ordered locus">SCO3124</name>
    <name type="ORF">SCE66.03</name>
</gene>
<evidence type="ECO:0000255" key="1">
    <source>
        <dbReference type="HAMAP-Rule" id="MF_01334"/>
    </source>
</evidence>
<evidence type="ECO:0000305" key="2"/>
<protein>
    <recommendedName>
        <fullName evidence="1">Large ribosomal subunit protein bL25</fullName>
    </recommendedName>
    <alternativeName>
        <fullName evidence="2">50S ribosomal protein L25</fullName>
    </alternativeName>
    <alternativeName>
        <fullName evidence="1">General stress protein CTC</fullName>
    </alternativeName>
</protein>